<keyword id="KW-0963">Cytoplasm</keyword>
<keyword id="KW-0690">Ribosome biogenesis</keyword>
<accession>C3L0C0</accession>
<gene>
    <name evidence="1" type="primary">rimP</name>
    <name type="ordered locus">CLJ_B2647</name>
</gene>
<dbReference type="EMBL" id="CP001083">
    <property type="protein sequence ID" value="ACQ53525.1"/>
    <property type="molecule type" value="Genomic_DNA"/>
</dbReference>
<dbReference type="RefSeq" id="WP_003362564.1">
    <property type="nucleotide sequence ID" value="NC_012658.1"/>
</dbReference>
<dbReference type="SMR" id="C3L0C0"/>
<dbReference type="KEGG" id="cbi:CLJ_B2647"/>
<dbReference type="HOGENOM" id="CLU_070525_2_0_9"/>
<dbReference type="Proteomes" id="UP000002333">
    <property type="component" value="Chromosome"/>
</dbReference>
<dbReference type="GO" id="GO:0005829">
    <property type="term" value="C:cytosol"/>
    <property type="evidence" value="ECO:0007669"/>
    <property type="project" value="TreeGrafter"/>
</dbReference>
<dbReference type="GO" id="GO:0000028">
    <property type="term" value="P:ribosomal small subunit assembly"/>
    <property type="evidence" value="ECO:0007669"/>
    <property type="project" value="TreeGrafter"/>
</dbReference>
<dbReference type="GO" id="GO:0006412">
    <property type="term" value="P:translation"/>
    <property type="evidence" value="ECO:0007669"/>
    <property type="project" value="TreeGrafter"/>
</dbReference>
<dbReference type="CDD" id="cd01734">
    <property type="entry name" value="YlxS_C"/>
    <property type="match status" value="1"/>
</dbReference>
<dbReference type="FunFam" id="2.30.30.180:FF:000007">
    <property type="entry name" value="Ribosome maturation factor RimP"/>
    <property type="match status" value="1"/>
</dbReference>
<dbReference type="FunFam" id="3.30.300.70:FF:000001">
    <property type="entry name" value="Ribosome maturation factor RimP"/>
    <property type="match status" value="1"/>
</dbReference>
<dbReference type="Gene3D" id="2.30.30.180">
    <property type="entry name" value="Ribosome maturation factor RimP, C-terminal domain"/>
    <property type="match status" value="1"/>
</dbReference>
<dbReference type="Gene3D" id="3.30.300.70">
    <property type="entry name" value="RimP-like superfamily, N-terminal"/>
    <property type="match status" value="1"/>
</dbReference>
<dbReference type="HAMAP" id="MF_01077">
    <property type="entry name" value="RimP"/>
    <property type="match status" value="1"/>
</dbReference>
<dbReference type="InterPro" id="IPR003728">
    <property type="entry name" value="Ribosome_maturation_RimP"/>
</dbReference>
<dbReference type="InterPro" id="IPR028998">
    <property type="entry name" value="RimP_C"/>
</dbReference>
<dbReference type="InterPro" id="IPR036847">
    <property type="entry name" value="RimP_C_sf"/>
</dbReference>
<dbReference type="InterPro" id="IPR028989">
    <property type="entry name" value="RimP_N"/>
</dbReference>
<dbReference type="InterPro" id="IPR035956">
    <property type="entry name" value="RimP_N_sf"/>
</dbReference>
<dbReference type="NCBIfam" id="NF000934">
    <property type="entry name" value="PRK00092.3-1"/>
    <property type="match status" value="1"/>
</dbReference>
<dbReference type="PANTHER" id="PTHR33867">
    <property type="entry name" value="RIBOSOME MATURATION FACTOR RIMP"/>
    <property type="match status" value="1"/>
</dbReference>
<dbReference type="PANTHER" id="PTHR33867:SF1">
    <property type="entry name" value="RIBOSOME MATURATION FACTOR RIMP"/>
    <property type="match status" value="1"/>
</dbReference>
<dbReference type="Pfam" id="PF17384">
    <property type="entry name" value="DUF150_C"/>
    <property type="match status" value="1"/>
</dbReference>
<dbReference type="Pfam" id="PF02576">
    <property type="entry name" value="RimP_N"/>
    <property type="match status" value="1"/>
</dbReference>
<dbReference type="SUPFAM" id="SSF74942">
    <property type="entry name" value="YhbC-like, C-terminal domain"/>
    <property type="match status" value="1"/>
</dbReference>
<dbReference type="SUPFAM" id="SSF75420">
    <property type="entry name" value="YhbC-like, N-terminal domain"/>
    <property type="match status" value="1"/>
</dbReference>
<organism>
    <name type="scientific">Clostridium botulinum (strain 657 / Type Ba4)</name>
    <dbReference type="NCBI Taxonomy" id="515621"/>
    <lineage>
        <taxon>Bacteria</taxon>
        <taxon>Bacillati</taxon>
        <taxon>Bacillota</taxon>
        <taxon>Clostridia</taxon>
        <taxon>Eubacteriales</taxon>
        <taxon>Clostridiaceae</taxon>
        <taxon>Clostridium</taxon>
    </lineage>
</organism>
<proteinExistence type="inferred from homology"/>
<comment type="function">
    <text evidence="1">Required for maturation of 30S ribosomal subunits.</text>
</comment>
<comment type="subcellular location">
    <subcellularLocation>
        <location evidence="1">Cytoplasm</location>
    </subcellularLocation>
</comment>
<comment type="similarity">
    <text evidence="1">Belongs to the RimP family.</text>
</comment>
<name>RIMP_CLOB6</name>
<evidence type="ECO:0000255" key="1">
    <source>
        <dbReference type="HAMAP-Rule" id="MF_01077"/>
    </source>
</evidence>
<feature type="chain" id="PRO_0000384630" description="Ribosome maturation factor RimP">
    <location>
        <begin position="1"/>
        <end position="153"/>
    </location>
</feature>
<reference key="1">
    <citation type="submission" date="2008-05" db="EMBL/GenBank/DDBJ databases">
        <title>Genome sequence of Clostridium botulinum Ba4 strain 657.</title>
        <authorList>
            <person name="Shrivastava S."/>
            <person name="Brown J.L."/>
            <person name="Bruce D."/>
            <person name="Detter C."/>
            <person name="Munk C."/>
            <person name="Smith L.A."/>
            <person name="Smith T.J."/>
            <person name="Sutton G."/>
            <person name="Brettin T.S."/>
        </authorList>
    </citation>
    <scope>NUCLEOTIDE SEQUENCE [LARGE SCALE GENOMIC DNA]</scope>
    <source>
        <strain>657 / Type Ba4</strain>
    </source>
</reference>
<sequence length="153" mass="17792">MSKHSLIENLKKQIEPIVEGLNYELYHIEFVKEGKENYLRIYIDSENGVSLEGCEKVSRAVSELLDDIDPIQESYYLEVSSPGIDRVLYTDKHLEKYKGYNIVLNLYSSIDKKKKYEGELVDFNENEINIKVEENIVTIPREKISKTTLKGEL</sequence>
<protein>
    <recommendedName>
        <fullName evidence="1">Ribosome maturation factor RimP</fullName>
    </recommendedName>
</protein>